<name>ERF1_DICDI</name>
<sequence length="441" mass="49346">MSAVDDQQNADKQVEQWKIKKLIKNLEAARGNGTSMISLIIRPGDQIAKVNKMLAEEYGTASNIKSRVNRLSVLGAITSAQQRLKLYTKVPDNGLVIYCGTMVTDEGKEKPVRIDIEPFKPINTSLYLCDNKFHTAPLGELLESDEKFGFIVVDGNGALFGLLCGSTRTVLHKITVDLPKKHGRGGQSALRFARLRMEKRHNYVRKVSELATQFYVTNDKPNVSGLILAGSADFKTELGTSDMFDQRLREKIIKIVDVSYGGDNGFNQAIELSGEVLSSVKFIQEKKLISQFFEEIAQDTGKYCFGIADTLKALDLGAAHTLIVWESLETIRYLLRLPTGEEKVIFLNKDQNKDASVFKDKESGLDYEIVEEMPIVEWFANNYKNFGASLEFVTNKSQEGSQFCKGFGGLGGLLRYQVDFAQLNDFDNPDENEYDDSDSDF</sequence>
<proteinExistence type="evidence at transcript level"/>
<dbReference type="EMBL" id="AF298834">
    <property type="protein sequence ID" value="AAK07832.1"/>
    <property type="molecule type" value="mRNA"/>
</dbReference>
<dbReference type="EMBL" id="AAFI02000119">
    <property type="protein sequence ID" value="EAL63131.1"/>
    <property type="molecule type" value="Genomic_DNA"/>
</dbReference>
<dbReference type="RefSeq" id="XP_636638.1">
    <property type="nucleotide sequence ID" value="XM_631546.1"/>
</dbReference>
<dbReference type="SMR" id="Q9BMX0"/>
<dbReference type="FunCoup" id="Q9BMX0">
    <property type="interactions" value="1151"/>
</dbReference>
<dbReference type="STRING" id="44689.Q9BMX0"/>
<dbReference type="PaxDb" id="44689-DDB0191343"/>
<dbReference type="EnsemblProtists" id="EAL63131">
    <property type="protein sequence ID" value="EAL63131"/>
    <property type="gene ID" value="DDB_G0288613"/>
</dbReference>
<dbReference type="GeneID" id="8626719"/>
<dbReference type="KEGG" id="ddi:DDB_G0288613"/>
<dbReference type="dictyBase" id="DDB_G0288613">
    <property type="gene designation" value="erf1"/>
</dbReference>
<dbReference type="VEuPathDB" id="AmoebaDB:DDB_G0288613"/>
<dbReference type="eggNOG" id="KOG0688">
    <property type="taxonomic scope" value="Eukaryota"/>
</dbReference>
<dbReference type="HOGENOM" id="CLU_035759_2_1_1"/>
<dbReference type="InParanoid" id="Q9BMX0"/>
<dbReference type="OMA" id="GPGTEKM"/>
<dbReference type="PhylomeDB" id="Q9BMX0"/>
<dbReference type="Reactome" id="R-DDI-72764">
    <property type="pathway name" value="Eukaryotic Translation Termination"/>
</dbReference>
<dbReference type="Reactome" id="R-DDI-975956">
    <property type="pathway name" value="Nonsense Mediated Decay (NMD) independent of the Exon Junction Complex (EJC)"/>
</dbReference>
<dbReference type="Reactome" id="R-DDI-975957">
    <property type="pathway name" value="Nonsense Mediated Decay (NMD) enhanced by the Exon Junction Complex (EJC)"/>
</dbReference>
<dbReference type="PRO" id="PR:Q9BMX0"/>
<dbReference type="Proteomes" id="UP000002195">
    <property type="component" value="Chromosome 5"/>
</dbReference>
<dbReference type="GO" id="GO:0005829">
    <property type="term" value="C:cytosol"/>
    <property type="evidence" value="ECO:0000318"/>
    <property type="project" value="GO_Central"/>
</dbReference>
<dbReference type="GO" id="GO:0018444">
    <property type="term" value="C:translation release factor complex"/>
    <property type="evidence" value="ECO:0000318"/>
    <property type="project" value="GO_Central"/>
</dbReference>
<dbReference type="GO" id="GO:1990825">
    <property type="term" value="F:sequence-specific mRNA binding"/>
    <property type="evidence" value="ECO:0000318"/>
    <property type="project" value="GO_Central"/>
</dbReference>
<dbReference type="GO" id="GO:0016149">
    <property type="term" value="F:translation release factor activity, codon specific"/>
    <property type="evidence" value="ECO:0000318"/>
    <property type="project" value="GO_Central"/>
</dbReference>
<dbReference type="GO" id="GO:0002184">
    <property type="term" value="P:cytoplasmic translational termination"/>
    <property type="evidence" value="ECO:0000318"/>
    <property type="project" value="GO_Central"/>
</dbReference>
<dbReference type="FunFam" id="3.30.420.60:FF:000001">
    <property type="entry name" value="Eukaryotic peptide chain release factor subunit 1"/>
    <property type="match status" value="1"/>
</dbReference>
<dbReference type="FunFam" id="3.30.960.10:FF:000001">
    <property type="entry name" value="Eukaryotic peptide chain release factor subunit 1"/>
    <property type="match status" value="1"/>
</dbReference>
<dbReference type="FunFam" id="3.30.1330.30:FF:000006">
    <property type="entry name" value="Peptide chain release factor subunit 1"/>
    <property type="match status" value="1"/>
</dbReference>
<dbReference type="Gene3D" id="3.30.1330.30">
    <property type="match status" value="1"/>
</dbReference>
<dbReference type="Gene3D" id="3.30.960.10">
    <property type="entry name" value="eRF1 domain 1"/>
    <property type="match status" value="1"/>
</dbReference>
<dbReference type="Gene3D" id="3.30.420.60">
    <property type="entry name" value="eRF1 domain 2"/>
    <property type="match status" value="1"/>
</dbReference>
<dbReference type="InterPro" id="IPR042226">
    <property type="entry name" value="eFR1_2_sf"/>
</dbReference>
<dbReference type="InterPro" id="IPR005140">
    <property type="entry name" value="eRF1_1_Pelota"/>
</dbReference>
<dbReference type="InterPro" id="IPR024049">
    <property type="entry name" value="eRF1_1_sf"/>
</dbReference>
<dbReference type="InterPro" id="IPR005141">
    <property type="entry name" value="eRF1_2"/>
</dbReference>
<dbReference type="InterPro" id="IPR005142">
    <property type="entry name" value="eRF1_3"/>
</dbReference>
<dbReference type="InterPro" id="IPR004403">
    <property type="entry name" value="Peptide_chain-rel_eRF1/aRF1"/>
</dbReference>
<dbReference type="InterPro" id="IPR029064">
    <property type="entry name" value="Ribosomal_eL30-like_sf"/>
</dbReference>
<dbReference type="NCBIfam" id="TIGR03676">
    <property type="entry name" value="aRF1_eRF1"/>
    <property type="match status" value="1"/>
</dbReference>
<dbReference type="PANTHER" id="PTHR10113">
    <property type="entry name" value="PEPTIDE CHAIN RELEASE FACTOR SUBUNIT 1"/>
    <property type="match status" value="1"/>
</dbReference>
<dbReference type="Pfam" id="PF03463">
    <property type="entry name" value="eRF1_1"/>
    <property type="match status" value="1"/>
</dbReference>
<dbReference type="Pfam" id="PF03464">
    <property type="entry name" value="eRF1_2"/>
    <property type="match status" value="1"/>
</dbReference>
<dbReference type="Pfam" id="PF03465">
    <property type="entry name" value="eRF1_3"/>
    <property type="match status" value="1"/>
</dbReference>
<dbReference type="SMART" id="SM01194">
    <property type="entry name" value="eRF1_1"/>
    <property type="match status" value="1"/>
</dbReference>
<dbReference type="SUPFAM" id="SSF55315">
    <property type="entry name" value="L30e-like"/>
    <property type="match status" value="1"/>
</dbReference>
<dbReference type="SUPFAM" id="SSF55481">
    <property type="entry name" value="N-terminal domain of eukaryotic peptide chain release factor subunit 1, ERF1"/>
    <property type="match status" value="1"/>
</dbReference>
<dbReference type="SUPFAM" id="SSF53137">
    <property type="entry name" value="Translational machinery components"/>
    <property type="match status" value="1"/>
</dbReference>
<evidence type="ECO:0000250" key="1"/>
<evidence type="ECO:0000305" key="2"/>
<accession>Q9BMX0</accession>
<accession>Q54IP1</accession>
<keyword id="KW-0963">Cytoplasm</keyword>
<keyword id="KW-0648">Protein biosynthesis</keyword>
<keyword id="KW-1185">Reference proteome</keyword>
<gene>
    <name type="primary">erf1</name>
    <name type="ORF">DDB_G0288613</name>
</gene>
<reference key="1">
    <citation type="journal article" date="2001" name="Nucleic Acids Res.">
        <title>Class I release factors in ciliates with variant genetic codes.</title>
        <authorList>
            <person name="Inagaki Y."/>
            <person name="Doolittle W.F."/>
        </authorList>
    </citation>
    <scope>NUCLEOTIDE SEQUENCE [MRNA]</scope>
</reference>
<reference key="2">
    <citation type="journal article" date="2005" name="Nature">
        <title>The genome of the social amoeba Dictyostelium discoideum.</title>
        <authorList>
            <person name="Eichinger L."/>
            <person name="Pachebat J.A."/>
            <person name="Gloeckner G."/>
            <person name="Rajandream M.A."/>
            <person name="Sucgang R."/>
            <person name="Berriman M."/>
            <person name="Song J."/>
            <person name="Olsen R."/>
            <person name="Szafranski K."/>
            <person name="Xu Q."/>
            <person name="Tunggal B."/>
            <person name="Kummerfeld S."/>
            <person name="Madera M."/>
            <person name="Konfortov B.A."/>
            <person name="Rivero F."/>
            <person name="Bankier A.T."/>
            <person name="Lehmann R."/>
            <person name="Hamlin N."/>
            <person name="Davies R."/>
            <person name="Gaudet P."/>
            <person name="Fey P."/>
            <person name="Pilcher K."/>
            <person name="Chen G."/>
            <person name="Saunders D."/>
            <person name="Sodergren E.J."/>
            <person name="Davis P."/>
            <person name="Kerhornou A."/>
            <person name="Nie X."/>
            <person name="Hall N."/>
            <person name="Anjard C."/>
            <person name="Hemphill L."/>
            <person name="Bason N."/>
            <person name="Farbrother P."/>
            <person name="Desany B."/>
            <person name="Just E."/>
            <person name="Morio T."/>
            <person name="Rost R."/>
            <person name="Churcher C.M."/>
            <person name="Cooper J."/>
            <person name="Haydock S."/>
            <person name="van Driessche N."/>
            <person name="Cronin A."/>
            <person name="Goodhead I."/>
            <person name="Muzny D.M."/>
            <person name="Mourier T."/>
            <person name="Pain A."/>
            <person name="Lu M."/>
            <person name="Harper D."/>
            <person name="Lindsay R."/>
            <person name="Hauser H."/>
            <person name="James K.D."/>
            <person name="Quiles M."/>
            <person name="Madan Babu M."/>
            <person name="Saito T."/>
            <person name="Buchrieser C."/>
            <person name="Wardroper A."/>
            <person name="Felder M."/>
            <person name="Thangavelu M."/>
            <person name="Johnson D."/>
            <person name="Knights A."/>
            <person name="Loulseged H."/>
            <person name="Mungall K.L."/>
            <person name="Oliver K."/>
            <person name="Price C."/>
            <person name="Quail M.A."/>
            <person name="Urushihara H."/>
            <person name="Hernandez J."/>
            <person name="Rabbinowitsch E."/>
            <person name="Steffen D."/>
            <person name="Sanders M."/>
            <person name="Ma J."/>
            <person name="Kohara Y."/>
            <person name="Sharp S."/>
            <person name="Simmonds M.N."/>
            <person name="Spiegler S."/>
            <person name="Tivey A."/>
            <person name="Sugano S."/>
            <person name="White B."/>
            <person name="Walker D."/>
            <person name="Woodward J.R."/>
            <person name="Winckler T."/>
            <person name="Tanaka Y."/>
            <person name="Shaulsky G."/>
            <person name="Schleicher M."/>
            <person name="Weinstock G.M."/>
            <person name="Rosenthal A."/>
            <person name="Cox E.C."/>
            <person name="Chisholm R.L."/>
            <person name="Gibbs R.A."/>
            <person name="Loomis W.F."/>
            <person name="Platzer M."/>
            <person name="Kay R.R."/>
            <person name="Williams J.G."/>
            <person name="Dear P.H."/>
            <person name="Noegel A.A."/>
            <person name="Barrell B.G."/>
            <person name="Kuspa A."/>
        </authorList>
    </citation>
    <scope>NUCLEOTIDE SEQUENCE [LARGE SCALE GENOMIC DNA]</scope>
    <source>
        <strain>AX4</strain>
    </source>
</reference>
<organism>
    <name type="scientific">Dictyostelium discoideum</name>
    <name type="common">Social amoeba</name>
    <dbReference type="NCBI Taxonomy" id="44689"/>
    <lineage>
        <taxon>Eukaryota</taxon>
        <taxon>Amoebozoa</taxon>
        <taxon>Evosea</taxon>
        <taxon>Eumycetozoa</taxon>
        <taxon>Dictyostelia</taxon>
        <taxon>Dictyosteliales</taxon>
        <taxon>Dictyosteliaceae</taxon>
        <taxon>Dictyostelium</taxon>
    </lineage>
</organism>
<feature type="chain" id="PRO_0000143150" description="Eukaryotic peptide chain release factor subunit 1">
    <location>
        <begin position="1"/>
        <end position="441"/>
    </location>
</feature>
<feature type="sequence conflict" description="In Ref. 1; AAK07832." evidence="2" ref="1">
    <original>L</original>
    <variation>F</variation>
    <location>
        <position position="334"/>
    </location>
</feature>
<protein>
    <recommendedName>
        <fullName>Eukaryotic peptide chain release factor subunit 1</fullName>
        <shortName>Eukaryotic release factor 1</shortName>
        <shortName>eRF1</shortName>
    </recommendedName>
</protein>
<comment type="function">
    <text evidence="1">Directs the termination of nascent peptide synthesis (translation) in response to the termination codons UAA, UAG and UGA.</text>
</comment>
<comment type="subunit">
    <text evidence="1">Heterodimer of two subunits, one of which binds GTP.</text>
</comment>
<comment type="subcellular location">
    <subcellularLocation>
        <location evidence="1">Cytoplasm</location>
    </subcellularLocation>
</comment>
<comment type="similarity">
    <text evidence="2">Belongs to the eukaryotic release factor 1 family.</text>
</comment>